<feature type="chain" id="PRO_0000440594" description="Flavin-dependent halogenase otaD">
    <location>
        <begin position="1"/>
        <end position="498"/>
    </location>
</feature>
<feature type="binding site" evidence="1">
    <location>
        <position position="14"/>
    </location>
    <ligand>
        <name>FAD</name>
        <dbReference type="ChEBI" id="CHEBI:57692"/>
    </ligand>
</feature>
<feature type="binding site" evidence="1">
    <location>
        <position position="17"/>
    </location>
    <ligand>
        <name>FAD</name>
        <dbReference type="ChEBI" id="CHEBI:57692"/>
    </ligand>
</feature>
<feature type="binding site" evidence="1">
    <location>
        <position position="47"/>
    </location>
    <ligand>
        <name>FAD</name>
        <dbReference type="ChEBI" id="CHEBI:57692"/>
    </ligand>
</feature>
<feature type="binding site" evidence="1">
    <location>
        <position position="326"/>
    </location>
    <ligand>
        <name>chloride</name>
        <dbReference type="ChEBI" id="CHEBI:17996"/>
    </ligand>
</feature>
<feature type="binding site" evidence="1">
    <location>
        <position position="327"/>
    </location>
    <ligand>
        <name>chloride</name>
        <dbReference type="ChEBI" id="CHEBI:17996"/>
    </ligand>
</feature>
<feature type="binding site" evidence="1">
    <location>
        <position position="328"/>
    </location>
    <ligand>
        <name>FAD</name>
        <dbReference type="ChEBI" id="CHEBI:57692"/>
    </ligand>
</feature>
<keyword id="KW-0274">FAD</keyword>
<keyword id="KW-0285">Flavoprotein</keyword>
<keyword id="KW-0503">Monooxygenase</keyword>
<keyword id="KW-0560">Oxidoreductase</keyword>
<keyword id="KW-1185">Reference proteome</keyword>
<evidence type="ECO:0000250" key="1">
    <source>
        <dbReference type="UniProtKB" id="P95480"/>
    </source>
</evidence>
<evidence type="ECO:0000269" key="2">
    <source>
    </source>
</evidence>
<evidence type="ECO:0000269" key="3">
    <source>
    </source>
</evidence>
<evidence type="ECO:0000269" key="4">
    <source>
    </source>
</evidence>
<evidence type="ECO:0000269" key="5">
    <source>
    </source>
</evidence>
<evidence type="ECO:0000303" key="6">
    <source>
    </source>
</evidence>
<evidence type="ECO:0000303" key="7">
    <source>
    </source>
</evidence>
<evidence type="ECO:0000305" key="8"/>
<evidence type="ECO:0000305" key="9">
    <source>
    </source>
</evidence>
<protein>
    <recommendedName>
        <fullName evidence="6">Flavin-dependent halogenase otaD</fullName>
        <ecNumber evidence="3">1.14.14.-</ecNumber>
    </recommendedName>
    <alternativeName>
        <fullName evidence="7">Ochratoxin A biosynthesis cluster protein D</fullName>
    </alternativeName>
</protein>
<gene>
    <name evidence="7" type="primary">otaD</name>
    <name evidence="6" type="synonym">OTAhal</name>
    <name type="ORF">ASPCADRAFT_209543</name>
</gene>
<name>OTAD_ASPC5</name>
<accession>A0A1R3RGJ2</accession>
<accession>A0A1B2AIW0</accession>
<reference key="1">
    <citation type="journal article" date="2016" name="Appl. Environ. Microbiol.">
        <title>Identification of a halogenase involved in the biosynthesis of ochratoxin A in Aspergillus carbonarius.</title>
        <authorList>
            <person name="Ferrara M."/>
            <person name="Perrone G."/>
            <person name="Gambacorta L."/>
            <person name="Epifani F."/>
            <person name="Solfrizzo M."/>
            <person name="Gallo A."/>
        </authorList>
    </citation>
    <scope>NUCLEOTIDE SEQUENCE [GENOMIC DNA]</scope>
    <scope>FUNCTION</scope>
    <scope>DISRUPTION PHENOTYPE</scope>
    <source>
        <strain>ITEM 5010</strain>
    </source>
</reference>
<reference key="2">
    <citation type="journal article" date="2017" name="Genome Biol.">
        <title>Comparative genomics reveals high biological diversity and specific adaptations in the industrially and medically important fungal genus Aspergillus.</title>
        <authorList>
            <person name="de Vries R.P."/>
            <person name="Riley R."/>
            <person name="Wiebenga A."/>
            <person name="Aguilar-Osorio G."/>
            <person name="Amillis S."/>
            <person name="Uchima C.A."/>
            <person name="Anderluh G."/>
            <person name="Asadollahi M."/>
            <person name="Askin M."/>
            <person name="Barry K."/>
            <person name="Battaglia E."/>
            <person name="Bayram O."/>
            <person name="Benocci T."/>
            <person name="Braus-Stromeyer S.A."/>
            <person name="Caldana C."/>
            <person name="Canovas D."/>
            <person name="Cerqueira G.C."/>
            <person name="Chen F."/>
            <person name="Chen W."/>
            <person name="Choi C."/>
            <person name="Clum A."/>
            <person name="Dos Santos R.A."/>
            <person name="Damasio A.R."/>
            <person name="Diallinas G."/>
            <person name="Emri T."/>
            <person name="Fekete E."/>
            <person name="Flipphi M."/>
            <person name="Freyberg S."/>
            <person name="Gallo A."/>
            <person name="Gournas C."/>
            <person name="Habgood R."/>
            <person name="Hainaut M."/>
            <person name="Harispe M.L."/>
            <person name="Henrissat B."/>
            <person name="Hilden K.S."/>
            <person name="Hope R."/>
            <person name="Hossain A."/>
            <person name="Karabika E."/>
            <person name="Karaffa L."/>
            <person name="Karanyi Z."/>
            <person name="Krasevec N."/>
            <person name="Kuo A."/>
            <person name="Kusch H."/>
            <person name="LaButti K."/>
            <person name="Lagendijk E.L."/>
            <person name="Lapidus A."/>
            <person name="Levasseur A."/>
            <person name="Lindquist E."/>
            <person name="Lipzen A."/>
            <person name="Logrieco A.F."/>
            <person name="MacCabe A."/>
            <person name="Maekelae M.R."/>
            <person name="Malavazi I."/>
            <person name="Melin P."/>
            <person name="Meyer V."/>
            <person name="Mielnichuk N."/>
            <person name="Miskei M."/>
            <person name="Molnar A.P."/>
            <person name="Mule G."/>
            <person name="Ngan C.Y."/>
            <person name="Orejas M."/>
            <person name="Orosz E."/>
            <person name="Ouedraogo J.P."/>
            <person name="Overkamp K.M."/>
            <person name="Park H.-S."/>
            <person name="Perrone G."/>
            <person name="Piumi F."/>
            <person name="Punt P.J."/>
            <person name="Ram A.F."/>
            <person name="Ramon A."/>
            <person name="Rauscher S."/>
            <person name="Record E."/>
            <person name="Riano-Pachon D.M."/>
            <person name="Robert V."/>
            <person name="Roehrig J."/>
            <person name="Ruller R."/>
            <person name="Salamov A."/>
            <person name="Salih N.S."/>
            <person name="Samson R.A."/>
            <person name="Sandor E."/>
            <person name="Sanguinetti M."/>
            <person name="Schuetze T."/>
            <person name="Sepcic K."/>
            <person name="Shelest E."/>
            <person name="Sherlock G."/>
            <person name="Sophianopoulou V."/>
            <person name="Squina F.M."/>
            <person name="Sun H."/>
            <person name="Susca A."/>
            <person name="Todd R.B."/>
            <person name="Tsang A."/>
            <person name="Unkles S.E."/>
            <person name="van de Wiele N."/>
            <person name="van Rossen-Uffink D."/>
            <person name="Oliveira J.V."/>
            <person name="Vesth T.C."/>
            <person name="Visser J."/>
            <person name="Yu J.-H."/>
            <person name="Zhou M."/>
            <person name="Andersen M.R."/>
            <person name="Archer D.B."/>
            <person name="Baker S.E."/>
            <person name="Benoit I."/>
            <person name="Brakhage A.A."/>
            <person name="Braus G.H."/>
            <person name="Fischer R."/>
            <person name="Frisvad J.C."/>
            <person name="Goldman G.H."/>
            <person name="Houbraken J."/>
            <person name="Oakley B."/>
            <person name="Pocsi I."/>
            <person name="Scazzocchio C."/>
            <person name="Seiboth B."/>
            <person name="vanKuyk P.A."/>
            <person name="Wortman J."/>
            <person name="Dyer P.S."/>
            <person name="Grigoriev I.V."/>
        </authorList>
    </citation>
    <scope>NUCLEOTIDE SEQUENCE [LARGE SCALE GENOMIC DNA] OF 1-394</scope>
    <source>
        <strain>ITEM 5010</strain>
    </source>
</reference>
<reference key="3">
    <citation type="journal article" date="2018" name="Appl. Environ. Microbiol.">
        <title>A consensus ochratoxin A biosynthetic pathway: insights from the genome sequence of Aspergillus ochraceus and a comparative genomic analysis.</title>
        <authorList>
            <person name="Wang Y."/>
            <person name="Wang L."/>
            <person name="Wu F."/>
            <person name="Liu F."/>
            <person name="Wang Q."/>
            <person name="Zhang X."/>
            <person name="Selvaraj J.N."/>
            <person name="Zhao Y."/>
            <person name="Xing F."/>
            <person name="Yin W.B."/>
            <person name="Liu Y."/>
        </authorList>
    </citation>
    <scope>FUNCTION</scope>
    <scope>DISRUPTION PHENOTYPE</scope>
    <scope>CATALYTIC ACTIVITY</scope>
    <scope>INDUCTION</scope>
    <scope>PATHWAY</scope>
</reference>
<reference key="4">
    <citation type="journal article" date="2020" name="Front. Microbiol.">
        <title>Comparative genomic analysis of ochratoxin A biosynthetic cluster in producing fungi: new evidence of a cyclase gene involvement.</title>
        <authorList>
            <person name="Ferrara M."/>
            <person name="Gallo A."/>
            <person name="Perrone G."/>
            <person name="Magista D."/>
            <person name="Baker S.E."/>
        </authorList>
    </citation>
    <scope>FUNCTION</scope>
</reference>
<reference key="5">
    <citation type="journal article" date="2021" name="Toxins">
        <title>Functional role of Aspergillus carbonarius AcOTAbZIP gene, a bZIP transcription factor within the OTA gene cluster.</title>
        <authorList>
            <person name="Gerin D."/>
            <person name="Garrapa F."/>
            <person name="Ballester A.R."/>
            <person name="Gonzalez-Candelas L."/>
            <person name="De Miccolis Angelini R.M."/>
            <person name="Faretra F."/>
            <person name="Pollastro S."/>
        </authorList>
    </citation>
    <scope>INDUCTION</scope>
</reference>
<reference key="6">
    <citation type="journal article" date="2022" name="Food Microbiol.">
        <title>Three stilbenes make difference to the antifungal effects on ochratoxin A and its precursor production of Aspergillus carbonarius.</title>
        <authorList>
            <person name="Cai X."/>
            <person name="Qi J."/>
            <person name="Xu Z."/>
            <person name="Huang L."/>
            <person name="Li Y."/>
            <person name="Ren X."/>
            <person name="Kong Q."/>
        </authorList>
    </citation>
    <scope>INDUCTION</scope>
    <scope>BIOTECHNOLOGY</scope>
</reference>
<proteinExistence type="evidence at protein level"/>
<comment type="function">
    <text evidence="2 3 9">Flavin-dependent halogenase; part of the gene cluster that mediates the biosynthesis of ochratoxin A (OTA), a mycotoxin composed of a chlorinated type I polyketide dihydroisocoumarin moiety linked to L-phenylalanine, and demonstrated to have nephrotoxic, immunotoxic, genotoxic, neurotoxic, and teratogenic properties (PubMed:27422838, PubMed:30054361). OtaD chlorinates ochratoxin B (OTB) at the C-5 position to form OTA (PubMed:27422838, PubMed:30054361). The pathway begins with the highly reducing polyketide synthase otaA that catalyzes the formation of the isocoumarin group during the initial stages of biosynthesis, starting from one acetate and 4 malonate units, to originate the characteristic pentaketide skeleton 7-methylmellein (7-MM) of the OTA molecule. The newly identified cyclase otaY might be involved in the polyketide cyclization reaction during the initial steps of the OTA biosynthesis. 7-MM is then oxidized into 7-carboxymellein (also called ochratoxin beta) by the cytochrome P450 monooxygenase otaC. The NRPS encoded by the otaB gene is involved in the linking of phenylalanine to the dihydroisocoumarin ring. The reaction catalyzed by NRPS results in the production of ochratoxin B (OTB), which is the non-chlorinated analog of OTA and which subsequently serves as the substrate of the halogenase otaD for chlorination activity to form the final molecular structure of OTA, containing a chlorine atom in the C-5 position of the molecule (Probable) (PubMed:33391201).</text>
</comment>
<comment type="catalytic activity">
    <reaction evidence="3">
        <text>ochratoxin B + FADH2 + chloride + O2 = ochratoxin A + FAD + 2 H2O</text>
        <dbReference type="Rhea" id="RHEA:72779"/>
        <dbReference type="ChEBI" id="CHEBI:15377"/>
        <dbReference type="ChEBI" id="CHEBI:15379"/>
        <dbReference type="ChEBI" id="CHEBI:17996"/>
        <dbReference type="ChEBI" id="CHEBI:57692"/>
        <dbReference type="ChEBI" id="CHEBI:58307"/>
        <dbReference type="ChEBI" id="CHEBI:166829"/>
        <dbReference type="ChEBI" id="CHEBI:192526"/>
    </reaction>
    <physiologicalReaction direction="left-to-right" evidence="3">
        <dbReference type="Rhea" id="RHEA:72780"/>
    </physiologicalReaction>
</comment>
<comment type="pathway">
    <text evidence="2 3">Mycotoxin biosynthesis.</text>
</comment>
<comment type="induction">
    <text evidence="3 4 5">Expression is positively regulated by the cluster-specific transcription factor otaR1 (PubMed:30054361, PubMed:33540740). Expression is also modulated by a second regulator, otaR2, which is adjacent to the biosynthetic gene cluster (PubMed:30054361). Stilbenes such as resveratrol, piceatannol and pterostilbene downregulate the expression of the ochratoxin cluster (PubMed:35082059).</text>
</comment>
<comment type="disruption phenotype">
    <text evidence="2 3">Completely eliminates the production of ochratoxin A and leads to a significant increase of ochratoxin B.</text>
</comment>
<comment type="biotechnology">
    <text evidence="5">Stilbenes such as resveratrol, piceatannol and pterostilbene affect the expression of the OTA cluster to reduce ochratoxin A and B production and thus could be used as naturally safe and efficient compounds in food active packaging or preservatives against ochratoxin A in food (PubMed:35082059). Pterostilbene with methoxy groups demonstrated greater inhibitory and antitoxic activity than resveratrol and piceatannol (PubMed:35082059).</text>
</comment>
<comment type="similarity">
    <text evidence="8">Belongs to the flavin-dependent halogenase family.</text>
</comment>
<comment type="sequence caution" evidence="8">
    <conflict type="erroneous gene model prediction">
        <sequence resource="EMBL-CDS" id="ANY27070"/>
    </conflict>
</comment>
<sequence length="498" mass="53895">MAIPQKATVLVIGGGPGGSYSASALAREGIDTVVLEADVFPRYHIGESLVASIRPFLKFIDLDDTFVNYGFVRKNGAAFKLNNQKEAYTDFILEAGADTFAWNVVRSESDDLMFKHAAKSGAQTFDGVRVTSIEFTDDDDDDDNNTNRPVSASWKAKDGRTGSIEFDYLVDASGRAGITSTKYLKNRTFNNYLKNVASWGYWEGATPYGMGTPVEGQPFFEALQDGSGWVWFIPLHNNTTSIGIVMNQELSTQKKKLSTTTSSRAFYLESLAGARGISRLLDPTTATLTSDIKHASDWSYNASAYGSPYLRIVGDAGAFIDPYFSSGVHLAVSGGLSAAVSIAASIRGDCPEEAAWKWHSQGVANRYGRFLLVVLGATKQIRAGDRPVLNGVGDEGFDEAFMVIRPVIQGIADVQGKVPVQDVYDAVTFSTNVVQPAAEGKRDPGWVEKARGALSHDEKEVGSVLNNLAKAYKTTDVCEGLMARLERGHLGLKLVSEV</sequence>
<dbReference type="EC" id="1.14.14.-" evidence="3"/>
<dbReference type="EMBL" id="KU960948">
    <property type="protein sequence ID" value="ANY27070.1"/>
    <property type="status" value="ALT_SEQ"/>
    <property type="molecule type" value="Genomic_DNA"/>
</dbReference>
<dbReference type="EMBL" id="KV907504">
    <property type="protein sequence ID" value="OOF93604.1"/>
    <property type="molecule type" value="Genomic_DNA"/>
</dbReference>
<dbReference type="SMR" id="A0A1R3RGJ2"/>
<dbReference type="STRING" id="602072.A0A1R3RGJ2"/>
<dbReference type="OrthoDB" id="3340390at2759"/>
<dbReference type="BioCyc" id="MetaCyc:MONOMER-21058"/>
<dbReference type="Proteomes" id="UP000188318">
    <property type="component" value="Unassembled WGS sequence"/>
</dbReference>
<dbReference type="GO" id="GO:0003824">
    <property type="term" value="F:catalytic activity"/>
    <property type="evidence" value="ECO:0000314"/>
    <property type="project" value="UniProt"/>
</dbReference>
<dbReference type="GO" id="GO:0071949">
    <property type="term" value="F:FAD binding"/>
    <property type="evidence" value="ECO:0007669"/>
    <property type="project" value="InterPro"/>
</dbReference>
<dbReference type="GO" id="GO:0140907">
    <property type="term" value="F:flavin-dependent halogenase activity"/>
    <property type="evidence" value="ECO:0000314"/>
    <property type="project" value="GO_Central"/>
</dbReference>
<dbReference type="GO" id="GO:0004497">
    <property type="term" value="F:monooxygenase activity"/>
    <property type="evidence" value="ECO:0007669"/>
    <property type="project" value="UniProtKB-KW"/>
</dbReference>
<dbReference type="GO" id="GO:1900818">
    <property type="term" value="P:ochratoxin A biosynthetic process"/>
    <property type="evidence" value="ECO:0000314"/>
    <property type="project" value="GO_Central"/>
</dbReference>
<dbReference type="Gene3D" id="3.50.50.60">
    <property type="entry name" value="FAD/NAD(P)-binding domain"/>
    <property type="match status" value="1"/>
</dbReference>
<dbReference type="InterPro" id="IPR002938">
    <property type="entry name" value="FAD-bd"/>
</dbReference>
<dbReference type="InterPro" id="IPR036188">
    <property type="entry name" value="FAD/NAD-bd_sf"/>
</dbReference>
<dbReference type="InterPro" id="IPR050816">
    <property type="entry name" value="Flavin-dep_Halogenase_NPB"/>
</dbReference>
<dbReference type="PANTHER" id="PTHR43747:SF5">
    <property type="entry name" value="FAD-BINDING DOMAIN-CONTAINING PROTEIN"/>
    <property type="match status" value="1"/>
</dbReference>
<dbReference type="PANTHER" id="PTHR43747">
    <property type="entry name" value="FAD-BINDING PROTEIN"/>
    <property type="match status" value="1"/>
</dbReference>
<dbReference type="Pfam" id="PF01494">
    <property type="entry name" value="FAD_binding_3"/>
    <property type="match status" value="1"/>
</dbReference>
<dbReference type="PRINTS" id="PR00420">
    <property type="entry name" value="RNGMNOXGNASE"/>
</dbReference>
<dbReference type="SUPFAM" id="SSF51905">
    <property type="entry name" value="FAD/NAD(P)-binding domain"/>
    <property type="match status" value="1"/>
</dbReference>
<organism>
    <name type="scientific">Aspergillus carbonarius (strain ITEM 5010)</name>
    <dbReference type="NCBI Taxonomy" id="602072"/>
    <lineage>
        <taxon>Eukaryota</taxon>
        <taxon>Fungi</taxon>
        <taxon>Dikarya</taxon>
        <taxon>Ascomycota</taxon>
        <taxon>Pezizomycotina</taxon>
        <taxon>Eurotiomycetes</taxon>
        <taxon>Eurotiomycetidae</taxon>
        <taxon>Eurotiales</taxon>
        <taxon>Aspergillaceae</taxon>
        <taxon>Aspergillus</taxon>
        <taxon>Aspergillus subgen. Circumdati</taxon>
    </lineage>
</organism>